<accession>O00548</accession>
<accession>B2RAK7</accession>
<accession>B5M0B3</accession>
<accession>Q9NU41</accession>
<accession>Q9UJV2</accession>
<keyword id="KW-0002">3D-structure</keyword>
<keyword id="KW-0025">Alternative splicing</keyword>
<keyword id="KW-1268">Autism spectrum disorder</keyword>
<keyword id="KW-0965">Cell junction</keyword>
<keyword id="KW-1003">Cell membrane</keyword>
<keyword id="KW-0217">Developmental protein</keyword>
<keyword id="KW-0221">Differentiation</keyword>
<keyword id="KW-1015">Disulfide bond</keyword>
<keyword id="KW-0245">EGF-like domain</keyword>
<keyword id="KW-0887">Epilepsy</keyword>
<keyword id="KW-0325">Glycoprotein</keyword>
<keyword id="KW-0991">Intellectual disability</keyword>
<keyword id="KW-1017">Isopeptide bond</keyword>
<keyword id="KW-0472">Membrane</keyword>
<keyword id="KW-0914">Notch signaling pathway</keyword>
<keyword id="KW-0597">Phosphoprotein</keyword>
<keyword id="KW-1267">Proteomics identification</keyword>
<keyword id="KW-1185">Reference proteome</keyword>
<keyword id="KW-0677">Repeat</keyword>
<keyword id="KW-0732">Signal</keyword>
<keyword id="KW-0812">Transmembrane</keyword>
<keyword id="KW-1133">Transmembrane helix</keyword>
<keyword id="KW-0832">Ubl conjugation</keyword>
<comment type="function">
    <text evidence="3 4 9 10">Transmembrane ligand protein of NOTCH1, NOTCH2 and NOTCH3 receptors that binds the extracellular domain (ECD) of Notch receptor in a cis and trans fashion manner (PubMed:11006133). Following transinteraction, ligand cells produce mechanical force that depends of a clathrin-mediated endocytosis, requiring ligand ubiquitination, EPN1 interaction, and actin polymerisation; these events promote Notch receptor extracellular domain (NECD) transendocytosis and triggers Notch signaling through induction of cleavage, hyperphosphorylation, and nuclear accumulation of the intracellular domain of Notch receptors (NICD) (By similarity). Is required for embryonic development and maintenance of adult stem cells in many different tissues and immune systeme; the DLL1-induced Notch signaling is mediated through an intercellular communication that regulates cell lineage, cell specification, cell patterning and morphogenesis through effects on differentiation and proliferation (PubMed:11581320). Plays a role in brain development at different level, namely by regulating neuronal differentiation of neural precursor cells via cell-cell interaction, most likely through the lateral inhibitory system in an endogenous level dependent-manner. During neocortex development, Dll1-Notch signaling transmission is mediated by dynamic interactions between intermediate neurogenic progenitors and radial glia; the cell-cell interactions are mediated via dynamic and transient elongation processes, likely to reactivate/maintain Notch activity in neighboring progenitors, and coordinate progenitor cell division and differentiation across radial and zonal boundaries. During cerebellar development, regulates Bergmann glial monolayer formation and its morphological maturation through a Notch signaling pathway. At the retina and spinal cord level, regulates neurogenesis by preventing the premature differentiation of neural progenitors and also by maintaining progenitors in spinal cord through Notch signaling pathway. Also controls neurogenesis of the neural tube in a progenitor domain-specific fashion along the dorsoventral axis. Maintains quiescence of neural stem cells and plays a role as a fate determinant that segregates asymmetrically to one daughter cell during neural stem cells mitosis, resulting in neuronal differentiation in Dll1-inheriting cell. Plays a role in immune systeme development, namely the development of all T-cells and marginal zone (MZ) B-cells (By similarity). Blocks the differentiation of progenitor cells into the B-cell lineage while promoting the emergence of a population of cells with the characteristics of a T-cell/NK-cell precursor (PubMed:11581320). Also plays a role during muscle development. During early development, inhibits myoblasts differentiation from the medial dermomyotomal lip and later regulates progenitor cell differentiation. Directly modulates cell adhesion and basal lamina formation in satellite cells through Notch signaling. Maintains myogenic progenitors pool by suppressing differentiation through down-regulation of MYOD1 and is required for satellite cell homing and PAX7 expression. During craniofacial and trunk myogenesis suppresses differentiation of cranial mesoderm-derived and somite-derived muscle via MYOD1 regulation but in cranial mesoderm-derived progenitors, is neither required for satellite cell homing nor for PAX7 expression. Also plays a role during pancreatic cell development. During type B pancreatic cell development, may be involved in the initiation of proximodistal patterning in the early pancreatic epithelium. Stimulates multipotent pancreatic progenitor cells proliferation and pancreatic growth by maintaining HES1 expression and PTF1A protein levels. During fetal stages of development, is required to maintain arterial identity and the responsiveness of arterial endothelial cells for VEGFA through regulation of KDR activation and NRP1 expression. Controls sprouting angiogenesis and subsequent vertical branch formation through regulation on tip cell differentiation. Negatively regulates goblet cell differentiation in intestine and controls secretory fat commitment through lateral inhibition in small intestine. Plays a role during inner ear development; negatively regulates auditory hair cell differentiation. Plays a role during nephron development through Notch signaling pathway. Regulates growth, blood pressure and energy homeostasis (By similarity).</text>
</comment>
<comment type="subunit">
    <text evidence="3 4 11 12 13">Homodimer. Interacts with TJP1. Interacts with MAGI1 (via PDZ domain); forms a complex with CTNNB1 and CDH2 and promotes recruitment to the adherens junction and stabilization on the cell surface. Interacts with PSEN1; undergoes a presenilin-dependent gamma-secretase cleavage that releases a Dll1-intracellular form. Interacts with MFAP5. Interacts with MIB1. Interacts with NEURL1B; leads to ubiquitination. Interacts with NEURL1 (By similarity). Interacts with SYNJ2BP; enhances DLL1 protein stability, and promotes Notch signaling in endothelial cells (PubMed:24025447). Interacts with MAGI1, MAGI2, MAGI3 and MPDZ (PubMed:15509766). Interacts (via ubiquitin) with EPN1 (via IUM domain); binding with NOTCH1 attached to neighboring cell, promotes ligand ubiquitination and EPN1 interaction, leading to NECD transendocytosis and Notch signaling. Interacts with NOTCH1 (By similarity) (PubMed:15509766, PubMed:24025447). Interacts with NOTCH2NLB; leading to promote Notch signaling pathway in a cell-autonomous manner through inhibition of cis DLL1-NOTCH2 interactions (PubMed:29856955).</text>
</comment>
<comment type="subcellular location">
    <subcellularLocation>
        <location evidence="4">Apical cell membrane</location>
        <topology evidence="4">Single-pass type I membrane protein</topology>
    </subcellularLocation>
    <subcellularLocation>
        <location evidence="4">Cell junction</location>
        <location evidence="4">Adherens junction</location>
    </subcellularLocation>
    <subcellularLocation>
        <location evidence="4">Membrane raft</location>
    </subcellularLocation>
    <text evidence="4">Distributed around adherens junction in the apical endfeet through interactions with MAGI1.</text>
</comment>
<comment type="alternative products">
    <event type="alternative splicing"/>
    <isoform>
        <id>O00548-1</id>
        <name>1</name>
        <sequence type="displayed"/>
    </isoform>
    <isoform>
        <id>O00548-2</id>
        <name>2</name>
        <sequence type="described" ref="VSP_057186 VSP_057187"/>
    </isoform>
</comment>
<comment type="tissue specificity">
    <text>Expressed in heart and pancreas, with lower expression in brain and muscle and almost no expression in placenta, lung, liver and kidney.</text>
</comment>
<comment type="PTM">
    <text evidence="2 4">Ubiquitinated by MIB (MIB1 or MIB2), leading to its endocytosis and subsequent degradation (By similarity). Ubiquitinated; promotes recycling back to the plasma membrane and confers a strong affinity for NOTCH1. Multi-ubiquitination of Lys-613 by MIB1 promotes both cis and trans-interaction with NOTCH1, as well as activation of Notch signaling. Ubiquitinated by NEURL1B (By similarity).</text>
</comment>
<comment type="PTM">
    <text evidence="4">Phosphorylated in a membrane association-dependent manner. Phosphorylation at Ser-697 requires the presence of Ser-694, whereas phosphorylation at Ser-694 occurs independently of the other site. Phosphorylation is required for full ligand activity in vitro and affects surface presentation, ectodomain shedding, and endocytosis.</text>
</comment>
<comment type="PTM">
    <text evidence="3">O-fucosylated. Can be elongated to a disaccharide by MFNG.</text>
</comment>
<comment type="disease" evidence="14">
    <disease id="DI-05719">
        <name>Neurodevelopmental disorder with non-specific brain abnormalities and with or without seizures</name>
        <acronym>NEDBAS</acronym>
        <description>An autosomal dominant disorder characterized by developmental delay, intellectual disability, seizures, autism spectrum disorder, behavioral abnormalities, and variable non-specific brain malformations.</description>
        <dbReference type="MIM" id="618709"/>
    </disease>
    <text>The disease is caused by variants affecting the gene represented in this entry.</text>
</comment>
<organism>
    <name type="scientific">Homo sapiens</name>
    <name type="common">Human</name>
    <dbReference type="NCBI Taxonomy" id="9606"/>
    <lineage>
        <taxon>Eukaryota</taxon>
        <taxon>Metazoa</taxon>
        <taxon>Chordata</taxon>
        <taxon>Craniata</taxon>
        <taxon>Vertebrata</taxon>
        <taxon>Euteleostomi</taxon>
        <taxon>Mammalia</taxon>
        <taxon>Eutheria</taxon>
        <taxon>Euarchontoglires</taxon>
        <taxon>Primates</taxon>
        <taxon>Haplorrhini</taxon>
        <taxon>Catarrhini</taxon>
        <taxon>Hominidae</taxon>
        <taxon>Homo</taxon>
    </lineage>
</organism>
<feature type="signal peptide" evidence="5">
    <location>
        <begin position="1"/>
        <end position="17"/>
    </location>
</feature>
<feature type="chain" id="PRO_0000007506" description="Delta-like protein 1">
    <location>
        <begin position="18"/>
        <end position="723"/>
    </location>
</feature>
<feature type="topological domain" description="Extracellular" evidence="5">
    <location>
        <begin position="18"/>
        <end position="545"/>
    </location>
</feature>
<feature type="transmembrane region" description="Helical" evidence="5">
    <location>
        <begin position="546"/>
        <end position="568"/>
    </location>
</feature>
<feature type="topological domain" description="Cytoplasmic" evidence="5">
    <location>
        <begin position="569"/>
        <end position="723"/>
    </location>
</feature>
<feature type="domain" description="DSL" evidence="7">
    <location>
        <begin position="177"/>
        <end position="221"/>
    </location>
</feature>
<feature type="domain" description="EGF-like 1" evidence="6">
    <location>
        <begin position="226"/>
        <end position="254"/>
    </location>
</feature>
<feature type="domain" description="EGF-like 2" evidence="6">
    <location>
        <begin position="257"/>
        <end position="285"/>
    </location>
</feature>
<feature type="domain" description="EGF-like 3" evidence="6">
    <location>
        <begin position="292"/>
        <end position="325"/>
    </location>
</feature>
<feature type="domain" description="EGF-like 4; calcium-binding" evidence="6">
    <location>
        <begin position="332"/>
        <end position="363"/>
    </location>
</feature>
<feature type="domain" description="EGF-like 5" evidence="6">
    <location>
        <begin position="370"/>
        <end position="402"/>
    </location>
</feature>
<feature type="domain" description="EGF-like 6" evidence="6">
    <location>
        <begin position="409"/>
        <end position="440"/>
    </location>
</feature>
<feature type="domain" description="EGF-like 7; calcium-binding" evidence="6">
    <location>
        <begin position="447"/>
        <end position="478"/>
    </location>
</feature>
<feature type="domain" description="EGF-like 8" evidence="6">
    <location>
        <begin position="485"/>
        <end position="516"/>
    </location>
</feature>
<feature type="region of interest" description="Disordered" evidence="8">
    <location>
        <begin position="653"/>
        <end position="702"/>
    </location>
</feature>
<feature type="region of interest" description="Interaction with MAGI1" evidence="4">
    <location>
        <begin position="720"/>
        <end position="723"/>
    </location>
</feature>
<feature type="compositionally biased region" description="Basic and acidic residues" evidence="8">
    <location>
        <begin position="653"/>
        <end position="664"/>
    </location>
</feature>
<feature type="modified residue" description="Phosphoserine; by PKB" evidence="4">
    <location>
        <position position="694"/>
    </location>
</feature>
<feature type="modified residue" description="Phosphoserine" evidence="4">
    <location>
        <position position="697"/>
    </location>
</feature>
<feature type="glycosylation site" description="N-linked (GlcNAc...) asparagine" evidence="5">
    <location>
        <position position="477"/>
    </location>
</feature>
<feature type="disulfide bond" evidence="1">
    <location>
        <begin position="179"/>
        <end position="188"/>
    </location>
</feature>
<feature type="disulfide bond" evidence="1">
    <location>
        <begin position="192"/>
        <end position="204"/>
    </location>
</feature>
<feature type="disulfide bond" evidence="1">
    <location>
        <begin position="212"/>
        <end position="221"/>
    </location>
</feature>
<feature type="disulfide bond" evidence="1">
    <location>
        <begin position="226"/>
        <end position="237"/>
    </location>
</feature>
<feature type="disulfide bond" evidence="1">
    <location>
        <begin position="230"/>
        <end position="243"/>
    </location>
</feature>
<feature type="disulfide bond" evidence="1">
    <location>
        <begin position="245"/>
        <end position="254"/>
    </location>
</feature>
<feature type="disulfide bond" evidence="1">
    <location>
        <begin position="257"/>
        <end position="268"/>
    </location>
</feature>
<feature type="disulfide bond" evidence="1">
    <location>
        <begin position="263"/>
        <end position="274"/>
    </location>
</feature>
<feature type="disulfide bond" evidence="1">
    <location>
        <begin position="276"/>
        <end position="285"/>
    </location>
</feature>
<feature type="disulfide bond" evidence="1">
    <location>
        <begin position="292"/>
        <end position="304"/>
    </location>
</feature>
<feature type="disulfide bond" evidence="1">
    <location>
        <begin position="298"/>
        <end position="314"/>
    </location>
</feature>
<feature type="disulfide bond" evidence="1">
    <location>
        <begin position="316"/>
        <end position="325"/>
    </location>
</feature>
<feature type="disulfide bond" evidence="1">
    <location>
        <begin position="332"/>
        <end position="343"/>
    </location>
</feature>
<feature type="disulfide bond" evidence="1">
    <location>
        <begin position="337"/>
        <end position="352"/>
    </location>
</feature>
<feature type="disulfide bond" evidence="1">
    <location>
        <begin position="354"/>
        <end position="363"/>
    </location>
</feature>
<feature type="disulfide bond" evidence="1">
    <location>
        <begin position="370"/>
        <end position="381"/>
    </location>
</feature>
<feature type="disulfide bond" evidence="1">
    <location>
        <begin position="375"/>
        <end position="391"/>
    </location>
</feature>
<feature type="disulfide bond" evidence="1">
    <location>
        <begin position="393"/>
        <end position="402"/>
    </location>
</feature>
<feature type="disulfide bond" evidence="1">
    <location>
        <begin position="409"/>
        <end position="420"/>
    </location>
</feature>
<feature type="disulfide bond" evidence="1">
    <location>
        <begin position="414"/>
        <end position="429"/>
    </location>
</feature>
<feature type="disulfide bond" evidence="1">
    <location>
        <begin position="431"/>
        <end position="440"/>
    </location>
</feature>
<feature type="disulfide bond" evidence="1">
    <location>
        <begin position="447"/>
        <end position="458"/>
    </location>
</feature>
<feature type="disulfide bond" evidence="1">
    <location>
        <begin position="452"/>
        <end position="467"/>
    </location>
</feature>
<feature type="disulfide bond" evidence="1">
    <location>
        <begin position="469"/>
        <end position="478"/>
    </location>
</feature>
<feature type="disulfide bond" evidence="1">
    <location>
        <begin position="485"/>
        <end position="496"/>
    </location>
</feature>
<feature type="disulfide bond" evidence="1">
    <location>
        <begin position="490"/>
        <end position="505"/>
    </location>
</feature>
<feature type="disulfide bond" evidence="1">
    <location>
        <begin position="507"/>
        <end position="516"/>
    </location>
</feature>
<feature type="cross-link" description="Glycyl lysine isopeptide (Lys-Gly) (interchain with G-Cter in ubiquitin)" evidence="4">
    <location>
        <position position="613"/>
    </location>
</feature>
<feature type="splice variant" id="VSP_057186" description="In isoform 2." evidence="15">
    <original>PICLPGCDEQHGFCDKPGECKCRV</original>
    <variation>RESLGRHRWLTRPRTRTTRRDGAS</variation>
    <location>
        <begin position="224"/>
        <end position="247"/>
    </location>
</feature>
<feature type="splice variant" id="VSP_057187" description="In isoform 2." evidence="15">
    <location>
        <begin position="248"/>
        <end position="723"/>
    </location>
</feature>
<feature type="sequence variant" id="VAR_083465" description="In NEDBAS; uncertain significance." evidence="14">
    <original>Q</original>
    <variation>QIGGQ</variation>
    <location>
        <position position="18"/>
    </location>
</feature>
<feature type="sequence variant" id="VAR_083466" description="In NEDBAS." evidence="14">
    <location>
        <begin position="19"/>
        <end position="723"/>
    </location>
</feature>
<feature type="sequence variant" id="VAR_083467" description="In NEDBAS." evidence="14">
    <location>
        <begin position="77"/>
        <end position="723"/>
    </location>
</feature>
<feature type="sequence variant" id="VAR_083468" description="In NEDBAS." evidence="14">
    <original>C</original>
    <variation>F</variation>
    <location>
        <position position="179"/>
    </location>
</feature>
<feature type="sequence variant" id="VAR_048976" description="In dbSNP:rs16901311.">
    <original>V</original>
    <variation>M</variation>
    <location>
        <position position="444"/>
    </location>
</feature>
<feature type="sequence variant" id="VAR_083469" description="In NEDBAS." evidence="14">
    <location>
        <begin position="498"/>
        <end position="723"/>
    </location>
</feature>
<feature type="sequence variant" id="VAR_083470" description="In NEDBAS; uncertain significance." evidence="14">
    <location>
        <begin position="509"/>
        <end position="723"/>
    </location>
</feature>
<feature type="sequence conflict" description="In Ref. 2; AAF05834." evidence="16" ref="2">
    <original>E</original>
    <variation>Q</variation>
    <location>
        <position position="498"/>
    </location>
</feature>
<feature type="sequence conflict" description="In Ref. 1; AAB61286, 2; AAF05834 and 3; AAG09716." evidence="16" ref="1 2 3">
    <original>R</original>
    <variation>G</variation>
    <location>
        <position position="502"/>
    </location>
</feature>
<feature type="sequence conflict" description="In Ref. 2; AAF05834." evidence="16" ref="2">
    <original>G</original>
    <variation>S</variation>
    <location>
        <position position="510"/>
    </location>
</feature>
<feature type="strand" evidence="18">
    <location>
        <begin position="23"/>
        <end position="30"/>
    </location>
</feature>
<feature type="strand" evidence="18">
    <location>
        <begin position="57"/>
        <end position="66"/>
    </location>
</feature>
<feature type="strand" evidence="18">
    <location>
        <begin position="78"/>
        <end position="83"/>
    </location>
</feature>
<feature type="strand" evidence="18">
    <location>
        <begin position="88"/>
        <end position="91"/>
    </location>
</feature>
<feature type="strand" evidence="18">
    <location>
        <begin position="108"/>
        <end position="112"/>
    </location>
</feature>
<feature type="strand" evidence="18">
    <location>
        <begin position="118"/>
        <end position="128"/>
    </location>
</feature>
<feature type="strand" evidence="18">
    <location>
        <begin position="143"/>
        <end position="152"/>
    </location>
</feature>
<feature type="strand" evidence="18">
    <location>
        <begin position="156"/>
        <end position="166"/>
    </location>
</feature>
<feature type="strand" evidence="18">
    <location>
        <begin position="169"/>
        <end position="179"/>
    </location>
</feature>
<feature type="strand" evidence="18">
    <location>
        <begin position="183"/>
        <end position="185"/>
    </location>
</feature>
<feature type="strand" evidence="18">
    <location>
        <begin position="195"/>
        <end position="197"/>
    </location>
</feature>
<feature type="strand" evidence="18">
    <location>
        <begin position="200"/>
        <end position="204"/>
    </location>
</feature>
<feature type="strand" evidence="18">
    <location>
        <begin position="206"/>
        <end position="208"/>
    </location>
</feature>
<feature type="strand" evidence="18">
    <location>
        <begin position="210"/>
        <end position="212"/>
    </location>
</feature>
<feature type="strand" evidence="18">
    <location>
        <begin position="216"/>
        <end position="218"/>
    </location>
</feature>
<feature type="strand" evidence="18">
    <location>
        <begin position="232"/>
        <end position="236"/>
    </location>
</feature>
<feature type="strand" evidence="18">
    <location>
        <begin position="249"/>
        <end position="254"/>
    </location>
</feature>
<feature type="strand" evidence="18">
    <location>
        <begin position="265"/>
        <end position="267"/>
    </location>
</feature>
<feature type="strand" evidence="18">
    <location>
        <begin position="280"/>
        <end position="285"/>
    </location>
</feature>
<feature type="strand" evidence="18">
    <location>
        <begin position="287"/>
        <end position="289"/>
    </location>
</feature>
<feature type="helix" evidence="18">
    <location>
        <begin position="292"/>
        <end position="295"/>
    </location>
</feature>
<feature type="strand" evidence="18">
    <location>
        <begin position="303"/>
        <end position="306"/>
    </location>
</feature>
<feature type="strand" evidence="18">
    <location>
        <begin position="308"/>
        <end position="310"/>
    </location>
</feature>
<feature type="strand" evidence="18">
    <location>
        <begin position="312"/>
        <end position="315"/>
    </location>
</feature>
<feature type="turn" evidence="18">
    <location>
        <begin position="322"/>
        <end position="325"/>
    </location>
</feature>
<feature type="turn" evidence="18">
    <location>
        <begin position="331"/>
        <end position="334"/>
    </location>
</feature>
<feature type="strand" evidence="18">
    <location>
        <begin position="342"/>
        <end position="346"/>
    </location>
</feature>
<feature type="strand" evidence="18">
    <location>
        <begin position="349"/>
        <end position="353"/>
    </location>
</feature>
<feature type="strand" evidence="18">
    <location>
        <begin position="358"/>
        <end position="362"/>
    </location>
</feature>
<feature type="strand" evidence="18">
    <location>
        <begin position="365"/>
        <end position="367"/>
    </location>
</feature>
<feature type="strand" evidence="18">
    <location>
        <begin position="380"/>
        <end position="383"/>
    </location>
</feature>
<feature type="strand" evidence="18">
    <location>
        <begin position="385"/>
        <end position="387"/>
    </location>
</feature>
<feature type="strand" evidence="18">
    <location>
        <begin position="389"/>
        <end position="392"/>
    </location>
</feature>
<feature type="strand" evidence="18">
    <location>
        <begin position="399"/>
        <end position="402"/>
    </location>
</feature>
<feature type="helix" evidence="18">
    <location>
        <begin position="408"/>
        <end position="411"/>
    </location>
</feature>
<feature type="strand" evidence="18">
    <location>
        <begin position="419"/>
        <end position="422"/>
    </location>
</feature>
<feature type="strand" evidence="18">
    <location>
        <begin position="427"/>
        <end position="430"/>
    </location>
</feature>
<protein>
    <recommendedName>
        <fullName evidence="16">Delta-like protein 1</fullName>
    </recommendedName>
    <alternativeName>
        <fullName>Drosophila Delta homolog 1</fullName>
        <shortName>Delta1</shortName>
        <shortName>H-Delta-1</shortName>
    </alternativeName>
</protein>
<name>DLL1_HUMAN</name>
<evidence type="ECO:0000250" key="1"/>
<evidence type="ECO:0000250" key="2">
    <source>
        <dbReference type="UniProtKB" id="P10041"/>
    </source>
</evidence>
<evidence type="ECO:0000250" key="3">
    <source>
        <dbReference type="UniProtKB" id="P97677"/>
    </source>
</evidence>
<evidence type="ECO:0000250" key="4">
    <source>
        <dbReference type="UniProtKB" id="Q61483"/>
    </source>
</evidence>
<evidence type="ECO:0000255" key="5"/>
<evidence type="ECO:0000255" key="6">
    <source>
        <dbReference type="PROSITE-ProRule" id="PRU00076"/>
    </source>
</evidence>
<evidence type="ECO:0000255" key="7">
    <source>
        <dbReference type="PROSITE-ProRule" id="PRU00377"/>
    </source>
</evidence>
<evidence type="ECO:0000256" key="8">
    <source>
        <dbReference type="SAM" id="MobiDB-lite"/>
    </source>
</evidence>
<evidence type="ECO:0000269" key="9">
    <source>
    </source>
</evidence>
<evidence type="ECO:0000269" key="10">
    <source>
    </source>
</evidence>
<evidence type="ECO:0000269" key="11">
    <source>
    </source>
</evidence>
<evidence type="ECO:0000269" key="12">
    <source>
    </source>
</evidence>
<evidence type="ECO:0000269" key="13">
    <source>
    </source>
</evidence>
<evidence type="ECO:0000269" key="14">
    <source>
    </source>
</evidence>
<evidence type="ECO:0000303" key="15">
    <source>
    </source>
</evidence>
<evidence type="ECO:0000305" key="16"/>
<evidence type="ECO:0000312" key="17">
    <source>
        <dbReference type="HGNC" id="HGNC:2908"/>
    </source>
</evidence>
<evidence type="ECO:0007829" key="18">
    <source>
        <dbReference type="PDB" id="4XBM"/>
    </source>
</evidence>
<gene>
    <name evidence="17" type="primary">DLL1</name>
    <name type="ORF">UNQ146/PRO172</name>
</gene>
<dbReference type="EMBL" id="AF003522">
    <property type="protein sequence ID" value="AAB61286.1"/>
    <property type="molecule type" value="mRNA"/>
</dbReference>
<dbReference type="EMBL" id="AF196571">
    <property type="protein sequence ID" value="AAF05834.1"/>
    <property type="molecule type" value="mRNA"/>
</dbReference>
<dbReference type="EMBL" id="EU927387">
    <property type="protein sequence ID" value="ACH57449.1"/>
    <property type="molecule type" value="mRNA"/>
</dbReference>
<dbReference type="EMBL" id="AF222310">
    <property type="protein sequence ID" value="AAG09716.1"/>
    <property type="molecule type" value="Genomic_DNA"/>
</dbReference>
<dbReference type="EMBL" id="AY358892">
    <property type="protein sequence ID" value="AAQ89251.1"/>
    <property type="molecule type" value="mRNA"/>
</dbReference>
<dbReference type="EMBL" id="AK314234">
    <property type="protein sequence ID" value="BAG36904.1"/>
    <property type="molecule type" value="mRNA"/>
</dbReference>
<dbReference type="EMBL" id="AL078605">
    <property type="status" value="NOT_ANNOTATED_CDS"/>
    <property type="molecule type" value="Genomic_DNA"/>
</dbReference>
<dbReference type="EMBL" id="CH471051">
    <property type="protein sequence ID" value="EAW47425.1"/>
    <property type="molecule type" value="Genomic_DNA"/>
</dbReference>
<dbReference type="CCDS" id="CCDS5313.1">
    <molecule id="O00548-1"/>
</dbReference>
<dbReference type="RefSeq" id="NP_005609.3">
    <molecule id="O00548-1"/>
    <property type="nucleotide sequence ID" value="NM_005618.3"/>
</dbReference>
<dbReference type="PDB" id="4XBM">
    <property type="method" value="X-ray"/>
    <property type="resolution" value="3.20 A"/>
    <property type="chains" value="A/B=21-545"/>
</dbReference>
<dbReference type="PDBsum" id="4XBM"/>
<dbReference type="SMR" id="O00548"/>
<dbReference type="BioGRID" id="118391">
    <property type="interactions" value="25"/>
</dbReference>
<dbReference type="CORUM" id="O00548"/>
<dbReference type="FunCoup" id="O00548">
    <property type="interactions" value="227"/>
</dbReference>
<dbReference type="IntAct" id="O00548">
    <property type="interactions" value="16"/>
</dbReference>
<dbReference type="STRING" id="9606.ENSP00000355718"/>
<dbReference type="GlyCosmos" id="O00548">
    <property type="glycosylation" value="1 site, No reported glycans"/>
</dbReference>
<dbReference type="GlyGen" id="O00548">
    <property type="glycosylation" value="3 sites, 1 O-linked glycan (1 site)"/>
</dbReference>
<dbReference type="iPTMnet" id="O00548"/>
<dbReference type="PhosphoSitePlus" id="O00548"/>
<dbReference type="BioMuta" id="DLL1"/>
<dbReference type="MassIVE" id="O00548"/>
<dbReference type="PaxDb" id="9606-ENSP00000355718"/>
<dbReference type="PeptideAtlas" id="O00548"/>
<dbReference type="ProteomicsDB" id="47965">
    <molecule id="O00548-1"/>
</dbReference>
<dbReference type="ABCD" id="O00548">
    <property type="antibodies" value="5 sequenced antibodies"/>
</dbReference>
<dbReference type="Antibodypedia" id="20091">
    <property type="antibodies" value="556 antibodies from 41 providers"/>
</dbReference>
<dbReference type="DNASU" id="28514"/>
<dbReference type="Ensembl" id="ENST00000366756.4">
    <molecule id="O00548-1"/>
    <property type="protein sequence ID" value="ENSP00000355718.3"/>
    <property type="gene ID" value="ENSG00000198719.9"/>
</dbReference>
<dbReference type="Ensembl" id="ENST00000616526.2">
    <molecule id="O00548-1"/>
    <property type="protein sequence ID" value="ENSP00000480905.1"/>
    <property type="gene ID" value="ENSG00000275555.2"/>
</dbReference>
<dbReference type="GeneID" id="28514"/>
<dbReference type="KEGG" id="hsa:28514"/>
<dbReference type="MANE-Select" id="ENST00000366756.4">
    <property type="protein sequence ID" value="ENSP00000355718.3"/>
    <property type="RefSeq nucleotide sequence ID" value="NM_005618.4"/>
    <property type="RefSeq protein sequence ID" value="NP_005609.3"/>
</dbReference>
<dbReference type="UCSC" id="uc003qxm.4">
    <molecule id="O00548-1"/>
    <property type="organism name" value="human"/>
</dbReference>
<dbReference type="AGR" id="HGNC:2908"/>
<dbReference type="CTD" id="28514"/>
<dbReference type="DisGeNET" id="28514"/>
<dbReference type="GeneCards" id="DLL1"/>
<dbReference type="GeneReviews" id="DLL1"/>
<dbReference type="HGNC" id="HGNC:2908">
    <property type="gene designation" value="DLL1"/>
</dbReference>
<dbReference type="HPA" id="ENSG00000198719">
    <property type="expression patterns" value="Tissue enhanced (lymphoid)"/>
</dbReference>
<dbReference type="MalaCards" id="DLL1"/>
<dbReference type="MIM" id="606582">
    <property type="type" value="gene"/>
</dbReference>
<dbReference type="MIM" id="618709">
    <property type="type" value="phenotype"/>
</dbReference>
<dbReference type="neXtProt" id="NX_O00548"/>
<dbReference type="OpenTargets" id="ENSG00000198719"/>
<dbReference type="Orphanet" id="93925">
    <property type="disease" value="Alobar holoprosencephaly"/>
</dbReference>
<dbReference type="Orphanet" id="178469">
    <property type="disease" value="Autosomal dominant non-syndromic intellectual disability"/>
</dbReference>
<dbReference type="Orphanet" id="93924">
    <property type="disease" value="Lobar holoprosencephaly"/>
</dbReference>
<dbReference type="Orphanet" id="280200">
    <property type="disease" value="Microform holoprosencephaly"/>
</dbReference>
<dbReference type="Orphanet" id="93926">
    <property type="disease" value="Midline interhemispheric variant of holoprosencephaly"/>
</dbReference>
<dbReference type="Orphanet" id="220386">
    <property type="disease" value="Semilobar holoprosencephaly"/>
</dbReference>
<dbReference type="Orphanet" id="280195">
    <property type="disease" value="Septopreoptic holoprosencephaly"/>
</dbReference>
<dbReference type="PharmGKB" id="PA27364"/>
<dbReference type="VEuPathDB" id="HostDB:ENSG00000198719"/>
<dbReference type="eggNOG" id="KOG1217">
    <property type="taxonomic scope" value="Eukaryota"/>
</dbReference>
<dbReference type="GeneTree" id="ENSGT00940000159781"/>
<dbReference type="HOGENOM" id="CLU_012574_1_0_1"/>
<dbReference type="InParanoid" id="O00548"/>
<dbReference type="OMA" id="GPFPWAA"/>
<dbReference type="OrthoDB" id="283575at2759"/>
<dbReference type="PAN-GO" id="O00548">
    <property type="GO annotations" value="4 GO annotations based on evolutionary models"/>
</dbReference>
<dbReference type="PhylomeDB" id="O00548"/>
<dbReference type="TreeFam" id="TF351835"/>
<dbReference type="PathwayCommons" id="O00548"/>
<dbReference type="Reactome" id="R-HSA-2122948">
    <property type="pathway name" value="Activated NOTCH1 Transmits Signal to the Nucleus"/>
</dbReference>
<dbReference type="Reactome" id="R-HSA-2644606">
    <property type="pathway name" value="Constitutive Signaling by NOTCH1 PEST Domain Mutants"/>
</dbReference>
<dbReference type="Reactome" id="R-HSA-2660826">
    <property type="pathway name" value="Constitutive Signaling by NOTCH1 t(7;9)(NOTCH1:M1580_K2555) Translocation Mutant"/>
</dbReference>
<dbReference type="Reactome" id="R-HSA-2691232">
    <property type="pathway name" value="Constitutive Signaling by NOTCH1 HD Domain Mutants"/>
</dbReference>
<dbReference type="Reactome" id="R-HSA-2894862">
    <property type="pathway name" value="Constitutive Signaling by NOTCH1 HD+PEST Domain Mutants"/>
</dbReference>
<dbReference type="Reactome" id="R-HSA-2979096">
    <property type="pathway name" value="NOTCH2 Activation and Transmission of Signal to the Nucleus"/>
</dbReference>
<dbReference type="Reactome" id="R-HSA-9013507">
    <property type="pathway name" value="NOTCH3 Activation and Transmission of Signal to the Nucleus"/>
</dbReference>
<dbReference type="Reactome" id="R-HSA-9022702">
    <property type="pathway name" value="MECP2 regulates transcription of neuronal ligands"/>
</dbReference>
<dbReference type="Reactome" id="R-HSA-9725554">
    <property type="pathway name" value="Differentiation of Keratinocytes in Interfollicular Epidermis in Mammalian Skin"/>
</dbReference>
<dbReference type="Reactome" id="R-HSA-9793380">
    <property type="pathway name" value="Formation of paraxial mesoderm"/>
</dbReference>
<dbReference type="Reactome" id="R-HSA-9824272">
    <property type="pathway name" value="Somitogenesis"/>
</dbReference>
<dbReference type="Reactome" id="R-HSA-9831926">
    <property type="pathway name" value="Nephron development"/>
</dbReference>
<dbReference type="SignaLink" id="O00548"/>
<dbReference type="SIGNOR" id="O00548"/>
<dbReference type="BioGRID-ORCS" id="28514">
    <property type="hits" value="11 hits in 1147 CRISPR screens"/>
</dbReference>
<dbReference type="ChiTaRS" id="DLL1">
    <property type="organism name" value="human"/>
</dbReference>
<dbReference type="EvolutionaryTrace" id="O00548"/>
<dbReference type="GeneWiki" id="Delta-like_1"/>
<dbReference type="GenomeRNAi" id="28514"/>
<dbReference type="Pharos" id="O00548">
    <property type="development level" value="Tbio"/>
</dbReference>
<dbReference type="PRO" id="PR:O00548"/>
<dbReference type="Proteomes" id="UP000005640">
    <property type="component" value="Chromosome 6"/>
</dbReference>
<dbReference type="RNAct" id="O00548">
    <property type="molecule type" value="protein"/>
</dbReference>
<dbReference type="Bgee" id="ENSG00000198719">
    <property type="expression patterns" value="Expressed in spleen and 95 other cell types or tissues"/>
</dbReference>
<dbReference type="ExpressionAtlas" id="O00548">
    <property type="expression patterns" value="baseline and differential"/>
</dbReference>
<dbReference type="GO" id="GO:0005912">
    <property type="term" value="C:adherens junction"/>
    <property type="evidence" value="ECO:0000250"/>
    <property type="project" value="UniProtKB"/>
</dbReference>
<dbReference type="GO" id="GO:0016324">
    <property type="term" value="C:apical plasma membrane"/>
    <property type="evidence" value="ECO:0000250"/>
    <property type="project" value="UniProtKB"/>
</dbReference>
<dbReference type="GO" id="GO:0031410">
    <property type="term" value="C:cytoplasmic vesicle"/>
    <property type="evidence" value="ECO:0007669"/>
    <property type="project" value="Ensembl"/>
</dbReference>
<dbReference type="GO" id="GO:0005576">
    <property type="term" value="C:extracellular region"/>
    <property type="evidence" value="ECO:0000303"/>
    <property type="project" value="UniProtKB"/>
</dbReference>
<dbReference type="GO" id="GO:0045121">
    <property type="term" value="C:membrane raft"/>
    <property type="evidence" value="ECO:0000250"/>
    <property type="project" value="UniProtKB"/>
</dbReference>
<dbReference type="GO" id="GO:0005886">
    <property type="term" value="C:plasma membrane"/>
    <property type="evidence" value="ECO:0000318"/>
    <property type="project" value="GO_Central"/>
</dbReference>
<dbReference type="GO" id="GO:0005509">
    <property type="term" value="F:calcium ion binding"/>
    <property type="evidence" value="ECO:0007669"/>
    <property type="project" value="InterPro"/>
</dbReference>
<dbReference type="GO" id="GO:0005112">
    <property type="term" value="F:Notch binding"/>
    <property type="evidence" value="ECO:0000353"/>
    <property type="project" value="UniProtKB"/>
</dbReference>
<dbReference type="GO" id="GO:0048018">
    <property type="term" value="F:receptor ligand activity"/>
    <property type="evidence" value="ECO:0000314"/>
    <property type="project" value="BHF-UCL"/>
</dbReference>
<dbReference type="GO" id="GO:0097110">
    <property type="term" value="F:scaffold protein binding"/>
    <property type="evidence" value="ECO:0007669"/>
    <property type="project" value="Ensembl"/>
</dbReference>
<dbReference type="GO" id="GO:0030957">
    <property type="term" value="F:Tat protein binding"/>
    <property type="evidence" value="ECO:0000353"/>
    <property type="project" value="UniProtKB"/>
</dbReference>
<dbReference type="GO" id="GO:0014002">
    <property type="term" value="P:astrocyte development"/>
    <property type="evidence" value="ECO:0000250"/>
    <property type="project" value="UniProtKB"/>
</dbReference>
<dbReference type="GO" id="GO:0030154">
    <property type="term" value="P:cell differentiation"/>
    <property type="evidence" value="ECO:0000304"/>
    <property type="project" value="UniProtKB"/>
</dbReference>
<dbReference type="GO" id="GO:0001709">
    <property type="term" value="P:cell fate determination"/>
    <property type="evidence" value="ECO:0000303"/>
    <property type="project" value="UniProtKB"/>
</dbReference>
<dbReference type="GO" id="GO:0021688">
    <property type="term" value="P:cerebellar molecular layer formation"/>
    <property type="evidence" value="ECO:0000250"/>
    <property type="project" value="UniProtKB"/>
</dbReference>
<dbReference type="GO" id="GO:0021693">
    <property type="term" value="P:cerebellar Purkinje cell layer structural organization"/>
    <property type="evidence" value="ECO:0000250"/>
    <property type="project" value="UniProtKB"/>
</dbReference>
<dbReference type="GO" id="GO:0072583">
    <property type="term" value="P:clathrin-dependent endocytosis"/>
    <property type="evidence" value="ECO:0000250"/>
    <property type="project" value="UniProtKB"/>
</dbReference>
<dbReference type="GO" id="GO:0007386">
    <property type="term" value="P:compartment pattern specification"/>
    <property type="evidence" value="ECO:0007669"/>
    <property type="project" value="Ensembl"/>
</dbReference>
<dbReference type="GO" id="GO:0007368">
    <property type="term" value="P:determination of left/right symmetry"/>
    <property type="evidence" value="ECO:0000250"/>
    <property type="project" value="BHF-UCL"/>
</dbReference>
<dbReference type="GO" id="GO:0097102">
    <property type="term" value="P:endothelial tip cell fate specification"/>
    <property type="evidence" value="ECO:0000250"/>
    <property type="project" value="UniProtKB"/>
</dbReference>
<dbReference type="GO" id="GO:0097009">
    <property type="term" value="P:energy homeostasis"/>
    <property type="evidence" value="ECO:0000250"/>
    <property type="project" value="UniProtKB"/>
</dbReference>
<dbReference type="GO" id="GO:0001947">
    <property type="term" value="P:heart looping"/>
    <property type="evidence" value="ECO:0000250"/>
    <property type="project" value="BHF-UCL"/>
</dbReference>
<dbReference type="GO" id="GO:0030097">
    <property type="term" value="P:hemopoiesis"/>
    <property type="evidence" value="ECO:0000303"/>
    <property type="project" value="UniProtKB"/>
</dbReference>
<dbReference type="GO" id="GO:0002085">
    <property type="term" value="P:inhibition of neuroepithelial cell differentiation"/>
    <property type="evidence" value="ECO:0007669"/>
    <property type="project" value="Ensembl"/>
</dbReference>
<dbReference type="GO" id="GO:0042491">
    <property type="term" value="P:inner ear auditory receptor cell differentiation"/>
    <property type="evidence" value="ECO:0007669"/>
    <property type="project" value="Ensembl"/>
</dbReference>
<dbReference type="GO" id="GO:0046331">
    <property type="term" value="P:lateral inhibition"/>
    <property type="evidence" value="ECO:0000250"/>
    <property type="project" value="UniProtKB"/>
</dbReference>
<dbReference type="GO" id="GO:0070986">
    <property type="term" value="P:left/right axis specification"/>
    <property type="evidence" value="ECO:0007669"/>
    <property type="project" value="Ensembl"/>
</dbReference>
<dbReference type="GO" id="GO:0072070">
    <property type="term" value="P:loop of Henle development"/>
    <property type="evidence" value="ECO:0007669"/>
    <property type="project" value="Ensembl"/>
</dbReference>
<dbReference type="GO" id="GO:0002315">
    <property type="term" value="P:marginal zone B cell differentiation"/>
    <property type="evidence" value="ECO:0000250"/>
    <property type="project" value="UniProtKB"/>
</dbReference>
<dbReference type="GO" id="GO:0030099">
    <property type="term" value="P:myeloid cell differentiation"/>
    <property type="evidence" value="ECO:0007669"/>
    <property type="project" value="Ensembl"/>
</dbReference>
<dbReference type="GO" id="GO:2000726">
    <property type="term" value="P:negative regulation of cardiac muscle cell differentiation"/>
    <property type="evidence" value="ECO:0007669"/>
    <property type="project" value="Ensembl"/>
</dbReference>
<dbReference type="GO" id="GO:0045596">
    <property type="term" value="P:negative regulation of cell differentiation"/>
    <property type="evidence" value="ECO:0000250"/>
    <property type="project" value="UniProtKB"/>
</dbReference>
<dbReference type="GO" id="GO:0008285">
    <property type="term" value="P:negative regulation of cell population proliferation"/>
    <property type="evidence" value="ECO:0000250"/>
    <property type="project" value="UniProtKB"/>
</dbReference>
<dbReference type="GO" id="GO:0045605">
    <property type="term" value="P:negative regulation of epidermal cell differentiation"/>
    <property type="evidence" value="ECO:0000250"/>
    <property type="project" value="UniProtKB"/>
</dbReference>
<dbReference type="GO" id="GO:0030857">
    <property type="term" value="P:negative regulation of epithelial cell differentiation"/>
    <property type="evidence" value="ECO:0000250"/>
    <property type="project" value="UniProtKB"/>
</dbReference>
<dbReference type="GO" id="GO:0034351">
    <property type="term" value="P:negative regulation of glial cell apoptotic process"/>
    <property type="evidence" value="ECO:0000250"/>
    <property type="project" value="UniProtKB"/>
</dbReference>
<dbReference type="GO" id="GO:0045611">
    <property type="term" value="P:negative regulation of hemocyte differentiation"/>
    <property type="evidence" value="ECO:0007669"/>
    <property type="project" value="Ensembl"/>
</dbReference>
<dbReference type="GO" id="GO:0045608">
    <property type="term" value="P:negative regulation of inner ear auditory receptor cell differentiation"/>
    <property type="evidence" value="ECO:0007669"/>
    <property type="project" value="Ensembl"/>
</dbReference>
<dbReference type="GO" id="GO:0032693">
    <property type="term" value="P:negative regulation of interleukin-10 production"/>
    <property type="evidence" value="ECO:0000315"/>
    <property type="project" value="UniProtKB"/>
</dbReference>
<dbReference type="GO" id="GO:0045638">
    <property type="term" value="P:negative regulation of myeloid cell differentiation"/>
    <property type="evidence" value="ECO:0007669"/>
    <property type="project" value="Ensembl"/>
</dbReference>
<dbReference type="GO" id="GO:0045662">
    <property type="term" value="P:negative regulation of myoblast differentiation"/>
    <property type="evidence" value="ECO:0000250"/>
    <property type="project" value="UniProtKB"/>
</dbReference>
<dbReference type="GO" id="GO:0045665">
    <property type="term" value="P:negative regulation of neuron differentiation"/>
    <property type="evidence" value="ECO:0000250"/>
    <property type="project" value="UniProtKB"/>
</dbReference>
<dbReference type="GO" id="GO:0045746">
    <property type="term" value="P:negative regulation of Notch signaling pathway"/>
    <property type="evidence" value="ECO:0000318"/>
    <property type="project" value="GO_Central"/>
</dbReference>
<dbReference type="GO" id="GO:0072006">
    <property type="term" value="P:nephron development"/>
    <property type="evidence" value="ECO:0000250"/>
    <property type="project" value="UniProtKB"/>
</dbReference>
<dbReference type="GO" id="GO:0060563">
    <property type="term" value="P:neuroepithelial cell differentiation"/>
    <property type="evidence" value="ECO:0007669"/>
    <property type="project" value="Ensembl"/>
</dbReference>
<dbReference type="GO" id="GO:0048665">
    <property type="term" value="P:neuron fate specification"/>
    <property type="evidence" value="ECO:0000250"/>
    <property type="project" value="UniProtKB"/>
</dbReference>
<dbReference type="GO" id="GO:0097150">
    <property type="term" value="P:neuronal stem cell population maintenance"/>
    <property type="evidence" value="ECO:0000270"/>
    <property type="project" value="UniProtKB"/>
</dbReference>
<dbReference type="GO" id="GO:0007219">
    <property type="term" value="P:Notch signaling pathway"/>
    <property type="evidence" value="ECO:0000314"/>
    <property type="project" value="BHF-UCL"/>
</dbReference>
<dbReference type="GO" id="GO:0060853">
    <property type="term" value="P:Notch signaling pathway involved in arterial endothelial cell fate commitment"/>
    <property type="evidence" value="ECO:0000250"/>
    <property type="project" value="UniProtKB"/>
</dbReference>
<dbReference type="GO" id="GO:0035265">
    <property type="term" value="P:organ growth"/>
    <property type="evidence" value="ECO:0000250"/>
    <property type="project" value="UniProtKB"/>
</dbReference>
<dbReference type="GO" id="GO:0008284">
    <property type="term" value="P:positive regulation of cell population proliferation"/>
    <property type="evidence" value="ECO:0000250"/>
    <property type="project" value="UniProtKB"/>
</dbReference>
<dbReference type="GO" id="GO:0045807">
    <property type="term" value="P:positive regulation of endocytosis"/>
    <property type="evidence" value="ECO:0000250"/>
    <property type="project" value="UniProtKB"/>
</dbReference>
<dbReference type="GO" id="GO:0010628">
    <property type="term" value="P:positive regulation of gene expression"/>
    <property type="evidence" value="ECO:0000314"/>
    <property type="project" value="BHF-UCL"/>
</dbReference>
<dbReference type="GO" id="GO:0045747">
    <property type="term" value="P:positive regulation of Notch signaling pathway"/>
    <property type="evidence" value="ECO:0000250"/>
    <property type="project" value="UniProtKB"/>
</dbReference>
<dbReference type="GO" id="GO:0048633">
    <property type="term" value="P:positive regulation of skeletal muscle tissue growth"/>
    <property type="evidence" value="ECO:0000250"/>
    <property type="project" value="UniProtKB"/>
</dbReference>
<dbReference type="GO" id="GO:1903672">
    <property type="term" value="P:positive regulation of sprouting angiogenesis"/>
    <property type="evidence" value="ECO:0000250"/>
    <property type="project" value="UniProtKB"/>
</dbReference>
<dbReference type="GO" id="GO:0045944">
    <property type="term" value="P:positive regulation of transcription by RNA polymerase II"/>
    <property type="evidence" value="ECO:0000250"/>
    <property type="project" value="BHF-UCL"/>
</dbReference>
<dbReference type="GO" id="GO:0072014">
    <property type="term" value="P:proximal tubule development"/>
    <property type="evidence" value="ECO:0007669"/>
    <property type="project" value="Ensembl"/>
</dbReference>
<dbReference type="GO" id="GO:0009954">
    <property type="term" value="P:proximal/distal pattern formation"/>
    <property type="evidence" value="ECO:0000250"/>
    <property type="project" value="UniProtKB"/>
</dbReference>
<dbReference type="GO" id="GO:0008217">
    <property type="term" value="P:regulation of blood pressure"/>
    <property type="evidence" value="ECO:0000250"/>
    <property type="project" value="UniProtKB"/>
</dbReference>
<dbReference type="GO" id="GO:0030155">
    <property type="term" value="P:regulation of cell adhesion"/>
    <property type="evidence" value="ECO:0000304"/>
    <property type="project" value="UniProtKB"/>
</dbReference>
<dbReference type="GO" id="GO:0051302">
    <property type="term" value="P:regulation of cell division"/>
    <property type="evidence" value="ECO:0000250"/>
    <property type="project" value="UniProtKB"/>
</dbReference>
<dbReference type="GO" id="GO:0040008">
    <property type="term" value="P:regulation of growth"/>
    <property type="evidence" value="ECO:0000250"/>
    <property type="project" value="UniProtKB"/>
</dbReference>
<dbReference type="GO" id="GO:0050767">
    <property type="term" value="P:regulation of neurogenesis"/>
    <property type="evidence" value="ECO:0000250"/>
    <property type="project" value="UniProtKB"/>
</dbReference>
<dbReference type="GO" id="GO:0048631">
    <property type="term" value="P:regulation of skeletal muscle tissue growth"/>
    <property type="evidence" value="ECO:0000250"/>
    <property type="project" value="UniProtKB"/>
</dbReference>
<dbReference type="GO" id="GO:0014807">
    <property type="term" value="P:regulation of somitogenesis"/>
    <property type="evidence" value="ECO:0000250"/>
    <property type="project" value="UniProtKB"/>
</dbReference>
<dbReference type="GO" id="GO:0030947">
    <property type="term" value="P:regulation of vascular endothelial growth factor receptor signaling pathway"/>
    <property type="evidence" value="ECO:0000250"/>
    <property type="project" value="BHF-UCL"/>
</dbReference>
<dbReference type="GO" id="GO:1900746">
    <property type="term" value="P:regulation of vascular endothelial growth factor signaling pathway"/>
    <property type="evidence" value="ECO:0000250"/>
    <property type="project" value="UniProtKB"/>
</dbReference>
<dbReference type="GO" id="GO:0060041">
    <property type="term" value="P:retina development in camera-type eye"/>
    <property type="evidence" value="ECO:0000250"/>
    <property type="project" value="UniProtKB"/>
</dbReference>
<dbReference type="GO" id="GO:0060042">
    <property type="term" value="P:retina morphogenesis in camera-type eye"/>
    <property type="evidence" value="ECO:0000250"/>
    <property type="project" value="UniProtKB"/>
</dbReference>
<dbReference type="GO" id="GO:0048630">
    <property type="term" value="P:skeletal muscle tissue growth"/>
    <property type="evidence" value="ECO:0000250"/>
    <property type="project" value="UniProtKB"/>
</dbReference>
<dbReference type="GO" id="GO:0098773">
    <property type="term" value="P:skin epidermis development"/>
    <property type="evidence" value="ECO:0000250"/>
    <property type="project" value="UniProtKB"/>
</dbReference>
<dbReference type="GO" id="GO:0001757">
    <property type="term" value="P:somite specification"/>
    <property type="evidence" value="ECO:0007669"/>
    <property type="project" value="Ensembl"/>
</dbReference>
<dbReference type="GO" id="GO:0001756">
    <property type="term" value="P:somitogenesis"/>
    <property type="evidence" value="ECO:0000250"/>
    <property type="project" value="UniProtKB"/>
</dbReference>
<dbReference type="GO" id="GO:0021510">
    <property type="term" value="P:spinal cord development"/>
    <property type="evidence" value="ECO:0000250"/>
    <property type="project" value="UniProtKB"/>
</dbReference>
<dbReference type="GO" id="GO:0003323">
    <property type="term" value="P:type B pancreatic cell development"/>
    <property type="evidence" value="ECO:0000250"/>
    <property type="project" value="UniProtKB"/>
</dbReference>
<dbReference type="CDD" id="cd00054">
    <property type="entry name" value="EGF_CA"/>
    <property type="match status" value="6"/>
</dbReference>
<dbReference type="FunFam" id="2.10.25.10:FF:000018">
    <property type="entry name" value="Delta-like 1"/>
    <property type="match status" value="1"/>
</dbReference>
<dbReference type="FunFam" id="2.10.25.10:FF:000012">
    <property type="entry name" value="Delta-like protein"/>
    <property type="match status" value="4"/>
</dbReference>
<dbReference type="FunFam" id="2.10.25.10:FF:000064">
    <property type="entry name" value="Delta-like protein"/>
    <property type="match status" value="1"/>
</dbReference>
<dbReference type="FunFam" id="2.10.25.140:FF:000001">
    <property type="entry name" value="Delta-like protein"/>
    <property type="match status" value="1"/>
</dbReference>
<dbReference type="FunFam" id="2.60.40.3510:FF:000002">
    <property type="entry name" value="Delta-like protein"/>
    <property type="match status" value="1"/>
</dbReference>
<dbReference type="FunFam" id="2.10.25.10:FF:000004">
    <property type="entry name" value="Neurogenic locus notch 1"/>
    <property type="match status" value="1"/>
</dbReference>
<dbReference type="Gene3D" id="2.10.25.140">
    <property type="match status" value="1"/>
</dbReference>
<dbReference type="Gene3D" id="2.60.40.3510">
    <property type="match status" value="1"/>
</dbReference>
<dbReference type="Gene3D" id="2.10.25.10">
    <property type="entry name" value="Laminin"/>
    <property type="match status" value="7"/>
</dbReference>
<dbReference type="InterPro" id="IPR001774">
    <property type="entry name" value="DSL"/>
</dbReference>
<dbReference type="InterPro" id="IPR001881">
    <property type="entry name" value="EGF-like_Ca-bd_dom"/>
</dbReference>
<dbReference type="InterPro" id="IPR000742">
    <property type="entry name" value="EGF-like_dom"/>
</dbReference>
<dbReference type="InterPro" id="IPR000152">
    <property type="entry name" value="EGF-type_Asp/Asn_hydroxyl_site"/>
</dbReference>
<dbReference type="InterPro" id="IPR018097">
    <property type="entry name" value="EGF_Ca-bd_CS"/>
</dbReference>
<dbReference type="InterPro" id="IPR009030">
    <property type="entry name" value="Growth_fac_rcpt_cys_sf"/>
</dbReference>
<dbReference type="InterPro" id="IPR051022">
    <property type="entry name" value="Notch_Cell-Fate_Det"/>
</dbReference>
<dbReference type="InterPro" id="IPR011651">
    <property type="entry name" value="Notch_ligand_N"/>
</dbReference>
<dbReference type="PANTHER" id="PTHR24049">
    <property type="entry name" value="CRUMBS FAMILY MEMBER"/>
    <property type="match status" value="1"/>
</dbReference>
<dbReference type="PANTHER" id="PTHR24049:SF22">
    <property type="entry name" value="DROSOPHILA CRUMBS HOMOLOG"/>
    <property type="match status" value="1"/>
</dbReference>
<dbReference type="Pfam" id="PF01414">
    <property type="entry name" value="DSL"/>
    <property type="match status" value="1"/>
</dbReference>
<dbReference type="Pfam" id="PF00008">
    <property type="entry name" value="EGF"/>
    <property type="match status" value="6"/>
</dbReference>
<dbReference type="Pfam" id="PF21700">
    <property type="entry name" value="EGF_DL_JAG"/>
    <property type="match status" value="1"/>
</dbReference>
<dbReference type="Pfam" id="PF07657">
    <property type="entry name" value="MNNL"/>
    <property type="match status" value="1"/>
</dbReference>
<dbReference type="PRINTS" id="PR00010">
    <property type="entry name" value="EGFBLOOD"/>
</dbReference>
<dbReference type="SMART" id="SM00051">
    <property type="entry name" value="DSL"/>
    <property type="match status" value="1"/>
</dbReference>
<dbReference type="SMART" id="SM00181">
    <property type="entry name" value="EGF"/>
    <property type="match status" value="8"/>
</dbReference>
<dbReference type="SMART" id="SM00179">
    <property type="entry name" value="EGF_CA"/>
    <property type="match status" value="6"/>
</dbReference>
<dbReference type="SUPFAM" id="SSF57184">
    <property type="entry name" value="Growth factor receptor domain"/>
    <property type="match status" value="2"/>
</dbReference>
<dbReference type="PROSITE" id="PS00010">
    <property type="entry name" value="ASX_HYDROXYL"/>
    <property type="match status" value="3"/>
</dbReference>
<dbReference type="PROSITE" id="PS51051">
    <property type="entry name" value="DSL"/>
    <property type="match status" value="1"/>
</dbReference>
<dbReference type="PROSITE" id="PS00022">
    <property type="entry name" value="EGF_1"/>
    <property type="match status" value="8"/>
</dbReference>
<dbReference type="PROSITE" id="PS01186">
    <property type="entry name" value="EGF_2"/>
    <property type="match status" value="8"/>
</dbReference>
<dbReference type="PROSITE" id="PS50026">
    <property type="entry name" value="EGF_3"/>
    <property type="match status" value="7"/>
</dbReference>
<dbReference type="PROSITE" id="PS01187">
    <property type="entry name" value="EGF_CA"/>
    <property type="match status" value="1"/>
</dbReference>
<proteinExistence type="evidence at protein level"/>
<sequence>MGSRCALALAVLSALLCQVWSSGVFELKLQEFVNKKGLLGNRNCCRGGAGPPPCACRTFFRVCLKHYQASVSPEPPCTYGSAVTPVLGVDSFSLPDGGGADSAFSNPIRFPFGFTWPGTFSLIIEALHTDSPDDLATENPERLISRLATQRHLTVGEEWSQDLHSSGRTDLKYSYRFVCDEHYYGEGCSVFCRPRDDAFGHFTCGERGEKVCNPGWKGPYCTEPICLPGCDEQHGFCDKPGECKCRVGWQGRYCDECIRYPGCLHGTCQQPWQCNCQEGWGGLFCNQDLNYCTHHKPCKNGATCTNTGQGSYTCSCRPGYTGATCELGIDECDPSPCKNGGSCTDLENSYSCTCPPGFYGKICELSAMTCADGPCFNGGRCSDSPDGGYSCRCPVGYSGFNCEKKIDYCSSSPCSNGAKCVDLGDAYLCRCQAGFSGRHCDDNVDDCASSPCANGGTCRDGVNDFSCTCPPGYTGRNCSAPVSRCEHAPCHNGATCHERGHRYVCECARGYGGPNCQFLLPELPPGPAVVDLTEKLEGQGGPFPWVAVCAGVILVLMLLLGCAAVVVCVRLRLQKHRPPADPCRGETETMNNLANCQREKDISVSIIGATQIKNTNKKADFHGDHSADKNGFKARYPAVDYNLVQDLKGDDTAVRDAHSKRDTKCQPQGSSGEEKGTPTTLRGGEASERKRPDSGCSTSKDTKYQSVYVISEEKDECVIATEV</sequence>
<reference key="1">
    <citation type="journal article" date="1999" name="Am. J. Pathol.">
        <title>Human ligands of the Notch receptor.</title>
        <authorList>
            <person name="Gray G.E."/>
            <person name="Mann R.S."/>
            <person name="Mitsiadis E."/>
            <person name="Henrique D."/>
            <person name="Carcangiu M.-L."/>
            <person name="Banks A."/>
            <person name="Leiman J."/>
            <person name="Ward D."/>
            <person name="Ish-Horowitz D."/>
            <person name="Artavanis-Tsakonas S."/>
        </authorList>
    </citation>
    <scope>NUCLEOTIDE SEQUENCE [MRNA] (ISOFORM 1)</scope>
</reference>
<reference key="2">
    <citation type="journal article" date="2000" name="Blood">
        <title>A soluble form of human Delta-like-1 inhibits differentiation of hematopoietic progenitor cells.</title>
        <authorList>
            <person name="Han W."/>
            <person name="Ye Q."/>
            <person name="Moore M.A.S."/>
        </authorList>
    </citation>
    <scope>NUCLEOTIDE SEQUENCE [MRNA] (ISOFORM 1)</scope>
</reference>
<reference key="3">
    <citation type="journal article" date="2009" name="BMC Genomics">
        <title>Discovery of novel human transcript variants by analysis of intronic single-block EST with polyadenylation site.</title>
        <authorList>
            <person name="Wang P."/>
            <person name="Yu P."/>
            <person name="Gao P."/>
            <person name="Shi T."/>
            <person name="Ma D."/>
        </authorList>
    </citation>
    <scope>NUCLEOTIDE SEQUENCE [MRNA] (ISOFORM 2)</scope>
</reference>
<reference key="4">
    <citation type="submission" date="2000-01" db="EMBL/GenBank/DDBJ databases">
        <title>Human Delta 1 gene sequence.</title>
        <authorList>
            <person name="Oda T."/>
            <person name="Chandrasekharappa S.C."/>
        </authorList>
    </citation>
    <scope>NUCLEOTIDE SEQUENCE [GENOMIC DNA]</scope>
</reference>
<reference key="5">
    <citation type="journal article" date="2003" name="Genome Res.">
        <title>The secreted protein discovery initiative (SPDI), a large-scale effort to identify novel human secreted and transmembrane proteins: a bioinformatics assessment.</title>
        <authorList>
            <person name="Clark H.F."/>
            <person name="Gurney A.L."/>
            <person name="Abaya E."/>
            <person name="Baker K."/>
            <person name="Baldwin D.T."/>
            <person name="Brush J."/>
            <person name="Chen J."/>
            <person name="Chow B."/>
            <person name="Chui C."/>
            <person name="Crowley C."/>
            <person name="Currell B."/>
            <person name="Deuel B."/>
            <person name="Dowd P."/>
            <person name="Eaton D."/>
            <person name="Foster J.S."/>
            <person name="Grimaldi C."/>
            <person name="Gu Q."/>
            <person name="Hass P.E."/>
            <person name="Heldens S."/>
            <person name="Huang A."/>
            <person name="Kim H.S."/>
            <person name="Klimowski L."/>
            <person name="Jin Y."/>
            <person name="Johnson S."/>
            <person name="Lee J."/>
            <person name="Lewis L."/>
            <person name="Liao D."/>
            <person name="Mark M.R."/>
            <person name="Robbie E."/>
            <person name="Sanchez C."/>
            <person name="Schoenfeld J."/>
            <person name="Seshagiri S."/>
            <person name="Simmons L."/>
            <person name="Singh J."/>
            <person name="Smith V."/>
            <person name="Stinson J."/>
            <person name="Vagts A."/>
            <person name="Vandlen R.L."/>
            <person name="Watanabe C."/>
            <person name="Wieand D."/>
            <person name="Woods K."/>
            <person name="Xie M.-H."/>
            <person name="Yansura D.G."/>
            <person name="Yi S."/>
            <person name="Yu G."/>
            <person name="Yuan J."/>
            <person name="Zhang M."/>
            <person name="Zhang Z."/>
            <person name="Goddard A.D."/>
            <person name="Wood W.I."/>
            <person name="Godowski P.J."/>
            <person name="Gray A.M."/>
        </authorList>
    </citation>
    <scope>NUCLEOTIDE SEQUENCE [LARGE SCALE MRNA] (ISOFORM 1)</scope>
</reference>
<reference key="6">
    <citation type="journal article" date="2004" name="Nat. Genet.">
        <title>Complete sequencing and characterization of 21,243 full-length human cDNAs.</title>
        <authorList>
            <person name="Ota T."/>
            <person name="Suzuki Y."/>
            <person name="Nishikawa T."/>
            <person name="Otsuki T."/>
            <person name="Sugiyama T."/>
            <person name="Irie R."/>
            <person name="Wakamatsu A."/>
            <person name="Hayashi K."/>
            <person name="Sato H."/>
            <person name="Nagai K."/>
            <person name="Kimura K."/>
            <person name="Makita H."/>
            <person name="Sekine M."/>
            <person name="Obayashi M."/>
            <person name="Nishi T."/>
            <person name="Shibahara T."/>
            <person name="Tanaka T."/>
            <person name="Ishii S."/>
            <person name="Yamamoto J."/>
            <person name="Saito K."/>
            <person name="Kawai Y."/>
            <person name="Isono Y."/>
            <person name="Nakamura Y."/>
            <person name="Nagahari K."/>
            <person name="Murakami K."/>
            <person name="Yasuda T."/>
            <person name="Iwayanagi T."/>
            <person name="Wagatsuma M."/>
            <person name="Shiratori A."/>
            <person name="Sudo H."/>
            <person name="Hosoiri T."/>
            <person name="Kaku Y."/>
            <person name="Kodaira H."/>
            <person name="Kondo H."/>
            <person name="Sugawara M."/>
            <person name="Takahashi M."/>
            <person name="Kanda K."/>
            <person name="Yokoi T."/>
            <person name="Furuya T."/>
            <person name="Kikkawa E."/>
            <person name="Omura Y."/>
            <person name="Abe K."/>
            <person name="Kamihara K."/>
            <person name="Katsuta N."/>
            <person name="Sato K."/>
            <person name="Tanikawa M."/>
            <person name="Yamazaki M."/>
            <person name="Ninomiya K."/>
            <person name="Ishibashi T."/>
            <person name="Yamashita H."/>
            <person name="Murakawa K."/>
            <person name="Fujimori K."/>
            <person name="Tanai H."/>
            <person name="Kimata M."/>
            <person name="Watanabe M."/>
            <person name="Hiraoka S."/>
            <person name="Chiba Y."/>
            <person name="Ishida S."/>
            <person name="Ono Y."/>
            <person name="Takiguchi S."/>
            <person name="Watanabe S."/>
            <person name="Yosida M."/>
            <person name="Hotuta T."/>
            <person name="Kusano J."/>
            <person name="Kanehori K."/>
            <person name="Takahashi-Fujii A."/>
            <person name="Hara H."/>
            <person name="Tanase T.-O."/>
            <person name="Nomura Y."/>
            <person name="Togiya S."/>
            <person name="Komai F."/>
            <person name="Hara R."/>
            <person name="Takeuchi K."/>
            <person name="Arita M."/>
            <person name="Imose N."/>
            <person name="Musashino K."/>
            <person name="Yuuki H."/>
            <person name="Oshima A."/>
            <person name="Sasaki N."/>
            <person name="Aotsuka S."/>
            <person name="Yoshikawa Y."/>
            <person name="Matsunawa H."/>
            <person name="Ichihara T."/>
            <person name="Shiohata N."/>
            <person name="Sano S."/>
            <person name="Moriya S."/>
            <person name="Momiyama H."/>
            <person name="Satoh N."/>
            <person name="Takami S."/>
            <person name="Terashima Y."/>
            <person name="Suzuki O."/>
            <person name="Nakagawa S."/>
            <person name="Senoh A."/>
            <person name="Mizoguchi H."/>
            <person name="Goto Y."/>
            <person name="Shimizu F."/>
            <person name="Wakebe H."/>
            <person name="Hishigaki H."/>
            <person name="Watanabe T."/>
            <person name="Sugiyama A."/>
            <person name="Takemoto M."/>
            <person name="Kawakami B."/>
            <person name="Yamazaki M."/>
            <person name="Watanabe K."/>
            <person name="Kumagai A."/>
            <person name="Itakura S."/>
            <person name="Fukuzumi Y."/>
            <person name="Fujimori Y."/>
            <person name="Komiyama M."/>
            <person name="Tashiro H."/>
            <person name="Tanigami A."/>
            <person name="Fujiwara T."/>
            <person name="Ono T."/>
            <person name="Yamada K."/>
            <person name="Fujii Y."/>
            <person name="Ozaki K."/>
            <person name="Hirao M."/>
            <person name="Ohmori Y."/>
            <person name="Kawabata A."/>
            <person name="Hikiji T."/>
            <person name="Kobatake N."/>
            <person name="Inagaki H."/>
            <person name="Ikema Y."/>
            <person name="Okamoto S."/>
            <person name="Okitani R."/>
            <person name="Kawakami T."/>
            <person name="Noguchi S."/>
            <person name="Itoh T."/>
            <person name="Shigeta K."/>
            <person name="Senba T."/>
            <person name="Matsumura K."/>
            <person name="Nakajima Y."/>
            <person name="Mizuno T."/>
            <person name="Morinaga M."/>
            <person name="Sasaki M."/>
            <person name="Togashi T."/>
            <person name="Oyama M."/>
            <person name="Hata H."/>
            <person name="Watanabe M."/>
            <person name="Komatsu T."/>
            <person name="Mizushima-Sugano J."/>
            <person name="Satoh T."/>
            <person name="Shirai Y."/>
            <person name="Takahashi Y."/>
            <person name="Nakagawa K."/>
            <person name="Okumura K."/>
            <person name="Nagase T."/>
            <person name="Nomura N."/>
            <person name="Kikuchi H."/>
            <person name="Masuho Y."/>
            <person name="Yamashita R."/>
            <person name="Nakai K."/>
            <person name="Yada T."/>
            <person name="Nakamura Y."/>
            <person name="Ohara O."/>
            <person name="Isogai T."/>
            <person name="Sugano S."/>
        </authorList>
    </citation>
    <scope>NUCLEOTIDE SEQUENCE [LARGE SCALE MRNA] (ISOFORM 1)</scope>
</reference>
<reference key="7">
    <citation type="journal article" date="2003" name="Nature">
        <title>The DNA sequence and analysis of human chromosome 6.</title>
        <authorList>
            <person name="Mungall A.J."/>
            <person name="Palmer S.A."/>
            <person name="Sims S.K."/>
            <person name="Edwards C.A."/>
            <person name="Ashurst J.L."/>
            <person name="Wilming L."/>
            <person name="Jones M.C."/>
            <person name="Horton R."/>
            <person name="Hunt S.E."/>
            <person name="Scott C.E."/>
            <person name="Gilbert J.G.R."/>
            <person name="Clamp M.E."/>
            <person name="Bethel G."/>
            <person name="Milne S."/>
            <person name="Ainscough R."/>
            <person name="Almeida J.P."/>
            <person name="Ambrose K.D."/>
            <person name="Andrews T.D."/>
            <person name="Ashwell R.I.S."/>
            <person name="Babbage A.K."/>
            <person name="Bagguley C.L."/>
            <person name="Bailey J."/>
            <person name="Banerjee R."/>
            <person name="Barker D.J."/>
            <person name="Barlow K.F."/>
            <person name="Bates K."/>
            <person name="Beare D.M."/>
            <person name="Beasley H."/>
            <person name="Beasley O."/>
            <person name="Bird C.P."/>
            <person name="Blakey S.E."/>
            <person name="Bray-Allen S."/>
            <person name="Brook J."/>
            <person name="Brown A.J."/>
            <person name="Brown J.Y."/>
            <person name="Burford D.C."/>
            <person name="Burrill W."/>
            <person name="Burton J."/>
            <person name="Carder C."/>
            <person name="Carter N.P."/>
            <person name="Chapman J.C."/>
            <person name="Clark S.Y."/>
            <person name="Clark G."/>
            <person name="Clee C.M."/>
            <person name="Clegg S."/>
            <person name="Cobley V."/>
            <person name="Collier R.E."/>
            <person name="Collins J.E."/>
            <person name="Colman L.K."/>
            <person name="Corby N.R."/>
            <person name="Coville G.J."/>
            <person name="Culley K.M."/>
            <person name="Dhami P."/>
            <person name="Davies J."/>
            <person name="Dunn M."/>
            <person name="Earthrowl M.E."/>
            <person name="Ellington A.E."/>
            <person name="Evans K.A."/>
            <person name="Faulkner L."/>
            <person name="Francis M.D."/>
            <person name="Frankish A."/>
            <person name="Frankland J."/>
            <person name="French L."/>
            <person name="Garner P."/>
            <person name="Garnett J."/>
            <person name="Ghori M.J."/>
            <person name="Gilby L.M."/>
            <person name="Gillson C.J."/>
            <person name="Glithero R.J."/>
            <person name="Grafham D.V."/>
            <person name="Grant M."/>
            <person name="Gribble S."/>
            <person name="Griffiths C."/>
            <person name="Griffiths M.N.D."/>
            <person name="Hall R."/>
            <person name="Halls K.S."/>
            <person name="Hammond S."/>
            <person name="Harley J.L."/>
            <person name="Hart E.A."/>
            <person name="Heath P.D."/>
            <person name="Heathcott R."/>
            <person name="Holmes S.J."/>
            <person name="Howden P.J."/>
            <person name="Howe K.L."/>
            <person name="Howell G.R."/>
            <person name="Huckle E."/>
            <person name="Humphray S.J."/>
            <person name="Humphries M.D."/>
            <person name="Hunt A.R."/>
            <person name="Johnson C.M."/>
            <person name="Joy A.A."/>
            <person name="Kay M."/>
            <person name="Keenan S.J."/>
            <person name="Kimberley A.M."/>
            <person name="King A."/>
            <person name="Laird G.K."/>
            <person name="Langford C."/>
            <person name="Lawlor S."/>
            <person name="Leongamornlert D.A."/>
            <person name="Leversha M."/>
            <person name="Lloyd C.R."/>
            <person name="Lloyd D.M."/>
            <person name="Loveland J.E."/>
            <person name="Lovell J."/>
            <person name="Martin S."/>
            <person name="Mashreghi-Mohammadi M."/>
            <person name="Maslen G.L."/>
            <person name="Matthews L."/>
            <person name="McCann O.T."/>
            <person name="McLaren S.J."/>
            <person name="McLay K."/>
            <person name="McMurray A."/>
            <person name="Moore M.J.F."/>
            <person name="Mullikin J.C."/>
            <person name="Niblett D."/>
            <person name="Nickerson T."/>
            <person name="Novik K.L."/>
            <person name="Oliver K."/>
            <person name="Overton-Larty E.K."/>
            <person name="Parker A."/>
            <person name="Patel R."/>
            <person name="Pearce A.V."/>
            <person name="Peck A.I."/>
            <person name="Phillimore B.J.C.T."/>
            <person name="Phillips S."/>
            <person name="Plumb R.W."/>
            <person name="Porter K.M."/>
            <person name="Ramsey Y."/>
            <person name="Ranby S.A."/>
            <person name="Rice C.M."/>
            <person name="Ross M.T."/>
            <person name="Searle S.M."/>
            <person name="Sehra H.K."/>
            <person name="Sheridan E."/>
            <person name="Skuce C.D."/>
            <person name="Smith S."/>
            <person name="Smith M."/>
            <person name="Spraggon L."/>
            <person name="Squares S.L."/>
            <person name="Steward C.A."/>
            <person name="Sycamore N."/>
            <person name="Tamlyn-Hall G."/>
            <person name="Tester J."/>
            <person name="Theaker A.J."/>
            <person name="Thomas D.W."/>
            <person name="Thorpe A."/>
            <person name="Tracey A."/>
            <person name="Tromans A."/>
            <person name="Tubby B."/>
            <person name="Wall M."/>
            <person name="Wallis J.M."/>
            <person name="West A.P."/>
            <person name="White S.S."/>
            <person name="Whitehead S.L."/>
            <person name="Whittaker H."/>
            <person name="Wild A."/>
            <person name="Willey D.J."/>
            <person name="Wilmer T.E."/>
            <person name="Wood J.M."/>
            <person name="Wray P.W."/>
            <person name="Wyatt J.C."/>
            <person name="Young L."/>
            <person name="Younger R.M."/>
            <person name="Bentley D.R."/>
            <person name="Coulson A."/>
            <person name="Durbin R.M."/>
            <person name="Hubbard T."/>
            <person name="Sulston J.E."/>
            <person name="Dunham I."/>
            <person name="Rogers J."/>
            <person name="Beck S."/>
        </authorList>
    </citation>
    <scope>NUCLEOTIDE SEQUENCE [LARGE SCALE GENOMIC DNA]</scope>
</reference>
<reference key="8">
    <citation type="submission" date="2005-09" db="EMBL/GenBank/DDBJ databases">
        <authorList>
            <person name="Mural R.J."/>
            <person name="Istrail S."/>
            <person name="Sutton G.G."/>
            <person name="Florea L."/>
            <person name="Halpern A.L."/>
            <person name="Mobarry C.M."/>
            <person name="Lippert R."/>
            <person name="Walenz B."/>
            <person name="Shatkay H."/>
            <person name="Dew I."/>
            <person name="Miller J.R."/>
            <person name="Flanigan M.J."/>
            <person name="Edwards N.J."/>
            <person name="Bolanos R."/>
            <person name="Fasulo D."/>
            <person name="Halldorsson B.V."/>
            <person name="Hannenhalli S."/>
            <person name="Turner R."/>
            <person name="Yooseph S."/>
            <person name="Lu F."/>
            <person name="Nusskern D.R."/>
            <person name="Shue B.C."/>
            <person name="Zheng X.H."/>
            <person name="Zhong F."/>
            <person name="Delcher A.L."/>
            <person name="Huson D.H."/>
            <person name="Kravitz S.A."/>
            <person name="Mouchard L."/>
            <person name="Reinert K."/>
            <person name="Remington K.A."/>
            <person name="Clark A.G."/>
            <person name="Waterman M.S."/>
            <person name="Eichler E.E."/>
            <person name="Adams M.D."/>
            <person name="Hunkapiller M.W."/>
            <person name="Myers E.W."/>
            <person name="Venter J.C."/>
        </authorList>
    </citation>
    <scope>NUCLEOTIDE SEQUENCE [LARGE SCALE GENOMIC DNA]</scope>
</reference>
<reference key="9">
    <citation type="journal article" date="2000" name="Biochem. Biophys. Res. Commun.">
        <title>Physical interaction of Delta1, Jagged1, and Jagged2 with Notch1 and Notch3 receptors.</title>
        <authorList>
            <person name="Shimizu K."/>
            <person name="Chiba S."/>
            <person name="Saito T."/>
            <person name="Kumano K."/>
            <person name="Hirai H."/>
        </authorList>
    </citation>
    <scope>FUNCTION</scope>
</reference>
<reference key="10">
    <citation type="journal article" date="2001" name="J. Exp. Med.">
        <title>Differential effects of Notch ligands Delta-1 and Jagged-1 in human lymphoid differentiation.</title>
        <authorList>
            <person name="Jaleco A.C."/>
            <person name="Neves H."/>
            <person name="Hooijberg E."/>
            <person name="Gameiro P."/>
            <person name="Clode N."/>
            <person name="Haury M."/>
            <person name="Henrique D."/>
            <person name="Parreira L."/>
        </authorList>
    </citation>
    <scope>FUNCTION</scope>
</reference>
<reference key="11">
    <citation type="journal article" date="2004" name="Development">
        <title>Delta proteins and MAGI proteins: an interaction of Notch ligands with intracellular scaffolding molecules and its significance for zebrafish development.</title>
        <authorList>
            <person name="Wright G.J."/>
            <person name="Leslie J.D."/>
            <person name="Ariza-McNaughton L."/>
            <person name="Lewis J."/>
        </authorList>
    </citation>
    <scope>INTERACTION WITH MAGI1; MAGI2; MAGI3 AND MPDZ</scope>
</reference>
<reference key="12">
    <citation type="journal article" date="2013" name="Circ. Res.">
        <title>Synaptojanin-2 binding protein stabilizes the Notch ligands DLL1 and DLL4 and inhibits sprouting angiogenesis.</title>
        <authorList>
            <person name="Adam M.G."/>
            <person name="Berger C."/>
            <person name="Feldner A."/>
            <person name="Yang W.J."/>
            <person name="Wuestehube-Lausch J."/>
            <person name="Herberich S.E."/>
            <person name="Pinder M."/>
            <person name="Gesierich S."/>
            <person name="Hammes H.P."/>
            <person name="Augustin H.G."/>
            <person name="Fischer A."/>
        </authorList>
    </citation>
    <scope>INTERACTION WITH SYNJ2BP</scope>
</reference>
<reference key="13">
    <citation type="journal article" date="2018" name="Cell">
        <title>Human-specific NOTCH2NL genes expand cortical neurogenesis through Delta/Notch regulation.</title>
        <authorList>
            <person name="Suzuki I.K."/>
            <person name="Gacquer D."/>
            <person name="Van Heurck R."/>
            <person name="Kumar D."/>
            <person name="Wojno M."/>
            <person name="Bilheu A."/>
            <person name="Herpoel A."/>
            <person name="Lambert N."/>
            <person name="Cheron J."/>
            <person name="Polleux F."/>
            <person name="Detours V."/>
            <person name="Vanderhaeghen P."/>
        </authorList>
    </citation>
    <scope>INTERACTION WITH NOTCH2NLB</scope>
</reference>
<reference key="14">
    <citation type="journal article" date="2019" name="Am. J. Hum. Genet.">
        <title>Haploinsufficiency of the Notch Ligand DLL1 Causes Variable Neurodevelopmental Disorders.</title>
        <authorList>
            <person name="Fischer-Zirnsak B."/>
            <person name="Segebrecht L."/>
            <person name="Schubach M."/>
            <person name="Charles P."/>
            <person name="Alderman E."/>
            <person name="Brown K."/>
            <person name="Cadieux-Dion M."/>
            <person name="Cartwright T."/>
            <person name="Chen Y."/>
            <person name="Costin C."/>
            <person name="Fehr S."/>
            <person name="Fitzgerald K.M."/>
            <person name="Fleming E."/>
            <person name="Foss K."/>
            <person name="Ha T."/>
            <person name="Hildebrand G."/>
            <person name="Horn D."/>
            <person name="Liu S."/>
            <person name="Marco E.J."/>
            <person name="McDonald M."/>
            <person name="McWalter K."/>
            <person name="Race S."/>
            <person name="Rush E.T."/>
            <person name="Si Y."/>
            <person name="Saunders C."/>
            <person name="Slavotinek A."/>
            <person name="Stockler-Ipsiroglu S."/>
            <person name="Telegrafi A."/>
            <person name="Thiffault I."/>
            <person name="Torti E."/>
            <person name="Tsai A.C."/>
            <person name="Wang X."/>
            <person name="Zafar M."/>
            <person name="Keren B."/>
            <person name="Kornak U."/>
            <person name="Boerkoel C.F."/>
            <person name="Mirzaa G."/>
            <person name="Ehmke N."/>
        </authorList>
    </citation>
    <scope>VARIANTS NEDBAS ILE-GLY-GLY-GLN-18 INS; 19-VAL--VAL-723 DEL; 77-CYS--VAL-723 DEL; PHE-179; 498-GLU--VAL-723 DEL AND 509-ARG--VAL-723 DEL</scope>
</reference>